<gene>
    <name evidence="1" type="primary">rpsS</name>
    <name type="ordered locus">Mmcs_1017</name>
</gene>
<sequence>MPRSLKKGPFVDDHLLKKVDVQNDKNTKQVIKTWSRRSTIIPDFIGHTFAVHDGRKHVPVFVTEAMVGHKLGEFAPTRTFKGHIKDDRKSKRR</sequence>
<evidence type="ECO:0000255" key="1">
    <source>
        <dbReference type="HAMAP-Rule" id="MF_00531"/>
    </source>
</evidence>
<evidence type="ECO:0000305" key="2"/>
<keyword id="KW-0687">Ribonucleoprotein</keyword>
<keyword id="KW-0689">Ribosomal protein</keyword>
<keyword id="KW-0694">RNA-binding</keyword>
<keyword id="KW-0699">rRNA-binding</keyword>
<reference key="1">
    <citation type="submission" date="2006-06" db="EMBL/GenBank/DDBJ databases">
        <title>Complete sequence of chromosome of Mycobacterium sp. MCS.</title>
        <authorList>
            <consortium name="US DOE Joint Genome Institute"/>
            <person name="Copeland A."/>
            <person name="Lucas S."/>
            <person name="Lapidus A."/>
            <person name="Barry K."/>
            <person name="Detter J.C."/>
            <person name="Glavina del Rio T."/>
            <person name="Hammon N."/>
            <person name="Israni S."/>
            <person name="Dalin E."/>
            <person name="Tice H."/>
            <person name="Pitluck S."/>
            <person name="Martinez M."/>
            <person name="Schmutz J."/>
            <person name="Larimer F."/>
            <person name="Land M."/>
            <person name="Hauser L."/>
            <person name="Kyrpides N."/>
            <person name="Kim E."/>
            <person name="Miller C.D."/>
            <person name="Hughes J.E."/>
            <person name="Anderson A.J."/>
            <person name="Sims R.C."/>
            <person name="Richardson P."/>
        </authorList>
    </citation>
    <scope>NUCLEOTIDE SEQUENCE [LARGE SCALE GENOMIC DNA]</scope>
    <source>
        <strain>MCS</strain>
    </source>
</reference>
<organism>
    <name type="scientific">Mycobacterium sp. (strain MCS)</name>
    <dbReference type="NCBI Taxonomy" id="164756"/>
    <lineage>
        <taxon>Bacteria</taxon>
        <taxon>Bacillati</taxon>
        <taxon>Actinomycetota</taxon>
        <taxon>Actinomycetes</taxon>
        <taxon>Mycobacteriales</taxon>
        <taxon>Mycobacteriaceae</taxon>
        <taxon>Mycobacterium</taxon>
    </lineage>
</organism>
<name>RS19_MYCSS</name>
<comment type="function">
    <text evidence="1">Protein S19 forms a complex with S13 that binds strongly to the 16S ribosomal RNA.</text>
</comment>
<comment type="similarity">
    <text evidence="1">Belongs to the universal ribosomal protein uS19 family.</text>
</comment>
<protein>
    <recommendedName>
        <fullName evidence="1">Small ribosomal subunit protein uS19</fullName>
    </recommendedName>
    <alternativeName>
        <fullName evidence="2">30S ribosomal protein S19</fullName>
    </alternativeName>
</protein>
<feature type="chain" id="PRO_0000265383" description="Small ribosomal subunit protein uS19">
    <location>
        <begin position="1"/>
        <end position="93"/>
    </location>
</feature>
<proteinExistence type="inferred from homology"/>
<dbReference type="EMBL" id="CP000384">
    <property type="protein sequence ID" value="ABG07131.1"/>
    <property type="molecule type" value="Genomic_DNA"/>
</dbReference>
<dbReference type="SMR" id="Q1BDA3"/>
<dbReference type="KEGG" id="mmc:Mmcs_1017"/>
<dbReference type="HOGENOM" id="CLU_144911_0_1_11"/>
<dbReference type="BioCyc" id="MSP164756:G1G6O-1041-MONOMER"/>
<dbReference type="GO" id="GO:0005737">
    <property type="term" value="C:cytoplasm"/>
    <property type="evidence" value="ECO:0007669"/>
    <property type="project" value="UniProtKB-ARBA"/>
</dbReference>
<dbReference type="GO" id="GO:0015935">
    <property type="term" value="C:small ribosomal subunit"/>
    <property type="evidence" value="ECO:0007669"/>
    <property type="project" value="InterPro"/>
</dbReference>
<dbReference type="GO" id="GO:0019843">
    <property type="term" value="F:rRNA binding"/>
    <property type="evidence" value="ECO:0007669"/>
    <property type="project" value="UniProtKB-UniRule"/>
</dbReference>
<dbReference type="GO" id="GO:0003735">
    <property type="term" value="F:structural constituent of ribosome"/>
    <property type="evidence" value="ECO:0007669"/>
    <property type="project" value="InterPro"/>
</dbReference>
<dbReference type="GO" id="GO:0000028">
    <property type="term" value="P:ribosomal small subunit assembly"/>
    <property type="evidence" value="ECO:0007669"/>
    <property type="project" value="TreeGrafter"/>
</dbReference>
<dbReference type="GO" id="GO:0006412">
    <property type="term" value="P:translation"/>
    <property type="evidence" value="ECO:0007669"/>
    <property type="project" value="UniProtKB-UniRule"/>
</dbReference>
<dbReference type="FunFam" id="3.30.860.10:FF:000001">
    <property type="entry name" value="30S ribosomal protein S19"/>
    <property type="match status" value="1"/>
</dbReference>
<dbReference type="Gene3D" id="3.30.860.10">
    <property type="entry name" value="30s Ribosomal Protein S19, Chain A"/>
    <property type="match status" value="1"/>
</dbReference>
<dbReference type="HAMAP" id="MF_00531">
    <property type="entry name" value="Ribosomal_uS19"/>
    <property type="match status" value="1"/>
</dbReference>
<dbReference type="InterPro" id="IPR002222">
    <property type="entry name" value="Ribosomal_uS19"/>
</dbReference>
<dbReference type="InterPro" id="IPR005732">
    <property type="entry name" value="Ribosomal_uS19_bac-type"/>
</dbReference>
<dbReference type="InterPro" id="IPR020934">
    <property type="entry name" value="Ribosomal_uS19_CS"/>
</dbReference>
<dbReference type="InterPro" id="IPR023575">
    <property type="entry name" value="Ribosomal_uS19_SF"/>
</dbReference>
<dbReference type="NCBIfam" id="TIGR01050">
    <property type="entry name" value="rpsS_bact"/>
    <property type="match status" value="1"/>
</dbReference>
<dbReference type="PANTHER" id="PTHR11880">
    <property type="entry name" value="RIBOSOMAL PROTEIN S19P FAMILY MEMBER"/>
    <property type="match status" value="1"/>
</dbReference>
<dbReference type="PANTHER" id="PTHR11880:SF8">
    <property type="entry name" value="SMALL RIBOSOMAL SUBUNIT PROTEIN US19M"/>
    <property type="match status" value="1"/>
</dbReference>
<dbReference type="Pfam" id="PF00203">
    <property type="entry name" value="Ribosomal_S19"/>
    <property type="match status" value="1"/>
</dbReference>
<dbReference type="PIRSF" id="PIRSF002144">
    <property type="entry name" value="Ribosomal_S19"/>
    <property type="match status" value="1"/>
</dbReference>
<dbReference type="PRINTS" id="PR00975">
    <property type="entry name" value="RIBOSOMALS19"/>
</dbReference>
<dbReference type="SUPFAM" id="SSF54570">
    <property type="entry name" value="Ribosomal protein S19"/>
    <property type="match status" value="1"/>
</dbReference>
<dbReference type="PROSITE" id="PS00323">
    <property type="entry name" value="RIBOSOMAL_S19"/>
    <property type="match status" value="1"/>
</dbReference>
<accession>Q1BDA3</accession>